<comment type="function">
    <text evidence="1">Transcriptional activator which binds specifically to the MEF2 element, 5'-YTA[AT](4)TAR-3', found in numerous muscle-specific genes. Also involved in the activation of numerous growth factor- and stress-induced genes. Mediates cellular functions not only in skeletal and cardiac muscle development, but also in neuronal differentiation and survival. Plays diverse roles in the control of cell growth, survival and apoptosis via p38 MAPK signaling in muscle-specific and/or growth factor-related transcription. In cerebellar granule neurons, phosphorylated and sumoylated MEF2A represses transcription of NUR77 promoting synaptic differentiation. Associates with chromatin to the ZNF16 promoter (By similarity).</text>
</comment>
<comment type="subunit">
    <text evidence="1">Binds DNA as a homo- or heterodimer (By similarity). Dimerizes with MEF2D. Interacts with HDAC7. Interacts with PIAS1; the interaction enhances sumoylation. Interacts with HDAC4, HDAC9 and SLC2A4RG. Interacts (via the N-terminal) with MAPK7; the interaction results in the phosphorylation and transcriptional activity of MEF2A (By similarity).</text>
</comment>
<comment type="subcellular location">
    <subcellularLocation>
        <location evidence="6">Nucleus</location>
    </subcellularLocation>
</comment>
<comment type="alternative products">
    <event type="alternative splicing"/>
    <isoform>
        <id>A2ICN5-1</id>
        <name>1</name>
        <sequence type="displayed"/>
    </isoform>
    <isoform>
        <id>A2ICN5-2</id>
        <name>2</name>
        <sequence type="described" ref="VSP_036599"/>
    </isoform>
    <isoform>
        <id>A2ICN5-3</id>
        <name>3</name>
        <sequence type="described" ref="VSP_036598 VSP_036599"/>
    </isoform>
</comment>
<comment type="domain">
    <text evidence="1">The beta domain, missing in a number of isoforms, is required for enhancement of transcriptional activity.</text>
</comment>
<comment type="PTM">
    <text evidence="1">Constitutive phosphorylation on Ser-408 promotes Lys-403 sumoylation thus preventing acetylation at this site. Dephosphorylation on Ser-408 by PPP3CA upon neuron depolarization promotes a switch from sumoylation to acetylation on residue Lys-403 leading to inhibition of dendrite claw differentiation. Phosphorylation on Thr-312 and Thr-319 are the main sites involved in p38 MAPK signaling and activate transcription. Phosphorylated on these sites by MAPK14/p38alpha and MAPK11/p38beta, but not by MAPK13/p38delta nor by MAPK12/p38gamma. Phosphorylation on Ser-408 by CDK5 induced by neurotoxicity inhibits MEF2A transcriptional activation leading to apoptosis of cortical neurons. Phosphorylation on Thr-312, Thr-319 and Ser-355 can be induced by EGF (By similarity).</text>
</comment>
<comment type="PTM">
    <text evidence="1">Sumoylation on Lys-403 is enhanced by PIAS1 and represses transcriptional activity. Phosphorylation on Ser-408 is required for sumoylation. Has no effect on nuclear location nor on DNA binding. Sumoylated with SUMO1 and, to a lesser extent with SUMO2 and SUMO3. PIASx facilitates sumoylation in postsynaptic dendrites in the cerebellar cortex and promotes their morphogenesis (By similarity).</text>
</comment>
<comment type="PTM">
    <text evidence="1">Acetylation on Lys-403 activates transcriptional activity. Acetylated by p300 on several sites in diffentiating myocytes. Acetylation on Lys-4 increases DNA binding and transactivation (By similarity). Hyperacetylation by p300 leads to enhanced cardiac myocyte growth and heart failure (By similarity).</text>
</comment>
<comment type="PTM">
    <text evidence="1">Proteolytically cleaved on several sites by caspase 3 and caspase 7 following neurotoxicity. Preferentially cleaves the CDK5-mediated hyperphosphorylated form which leads to cortical neuron apoptosis and transcriptional inactivation (By similarity).</text>
</comment>
<comment type="similarity">
    <text evidence="9">Belongs to the MEF2 family.</text>
</comment>
<feature type="chain" id="PRO_0000366968" description="Myocyte-specific enhancer factor 2A">
    <location>
        <begin position="1"/>
        <end position="507"/>
    </location>
</feature>
<feature type="domain" description="MADS-box" evidence="6">
    <location>
        <begin position="3"/>
        <end position="57"/>
    </location>
</feature>
<feature type="DNA-binding region" description="Mef2-type" evidence="5">
    <location>
        <begin position="58"/>
        <end position="86"/>
    </location>
</feature>
<feature type="region of interest" description="Disordered" evidence="7">
    <location>
        <begin position="175"/>
        <end position="269"/>
    </location>
</feature>
<feature type="region of interest" description="Required for interaction with MAPKs" evidence="1">
    <location>
        <begin position="266"/>
        <end position="283"/>
    </location>
</feature>
<feature type="region of interest" description="Beta domain" evidence="1">
    <location>
        <begin position="289"/>
        <end position="296"/>
    </location>
</feature>
<feature type="region of interest" description="Disordered" evidence="7">
    <location>
        <begin position="390"/>
        <end position="507"/>
    </location>
</feature>
<feature type="compositionally biased region" description="Polar residues" evidence="7">
    <location>
        <begin position="209"/>
        <end position="245"/>
    </location>
</feature>
<feature type="compositionally biased region" description="Polar residues" evidence="7">
    <location>
        <begin position="390"/>
        <end position="402"/>
    </location>
</feature>
<feature type="compositionally biased region" description="Pro residues" evidence="7">
    <location>
        <begin position="423"/>
        <end position="443"/>
    </location>
</feature>
<feature type="compositionally biased region" description="Low complexity" evidence="7">
    <location>
        <begin position="453"/>
        <end position="466"/>
    </location>
</feature>
<feature type="compositionally biased region" description="Basic and acidic residues" evidence="7">
    <location>
        <begin position="467"/>
        <end position="477"/>
    </location>
</feature>
<feature type="compositionally biased region" description="Basic and acidic residues" evidence="7">
    <location>
        <begin position="488"/>
        <end position="507"/>
    </location>
</feature>
<feature type="site" description="Cleavage" evidence="9">
    <location>
        <begin position="176"/>
        <end position="177"/>
    </location>
</feature>
<feature type="site" description="Cleavage" evidence="9">
    <location>
        <begin position="213"/>
        <end position="214"/>
    </location>
</feature>
<feature type="site" description="Cleavage" evidence="9">
    <location>
        <begin position="466"/>
        <end position="467"/>
    </location>
</feature>
<feature type="modified residue" description="Phosphoserine; by CK2" evidence="1">
    <location>
        <position position="59"/>
    </location>
</feature>
<feature type="modified residue" description="Phosphoserine" evidence="2">
    <location>
        <position position="98"/>
    </location>
</feature>
<feature type="modified residue" description="Phosphoserine" evidence="2">
    <location>
        <position position="235"/>
    </location>
</feature>
<feature type="modified residue" description="N6-acetyllysine" evidence="2">
    <location>
        <position position="249"/>
    </location>
</feature>
<feature type="modified residue" description="Phosphoserine" evidence="2">
    <location>
        <position position="255"/>
    </location>
</feature>
<feature type="modified residue" description="Phosphothreonine; by MAPK7 and MAPK14" evidence="2">
    <location>
        <position position="312"/>
    </location>
</feature>
<feature type="modified residue" description="Phosphothreonine; by MAPK7 and MAPK14" evidence="2">
    <location>
        <position position="319"/>
    </location>
</feature>
<feature type="modified residue" description="Phosphoserine; by MAPK7" evidence="2">
    <location>
        <position position="355"/>
    </location>
</feature>
<feature type="modified residue" description="N6-acetyllysine; alternate" evidence="3">
    <location>
        <position position="403"/>
    </location>
</feature>
<feature type="modified residue" description="Phosphoserine; by CDK5" evidence="2">
    <location>
        <position position="408"/>
    </location>
</feature>
<feature type="modified residue" description="Phosphothreonine" evidence="4">
    <location>
        <position position="415"/>
    </location>
</feature>
<feature type="modified residue" description="Phosphoserine" evidence="2">
    <location>
        <position position="453"/>
    </location>
</feature>
<feature type="cross-link" description="Glycyl lysine isopeptide (Lys-Gly) (interchain with G-Cter in SUMO); alternate" evidence="1">
    <location>
        <position position="403"/>
    </location>
</feature>
<feature type="splice variant" id="VSP_036598" description="In isoform 3." evidence="8">
    <original>ALNKKEHRGCDSPDPDTSYVLTPHTEEKYKKINEEFDNMMRNHKIA</original>
    <variation>TLRKKGLNGCESPDADDYFEHSPLSEDRFSKLNEDSDFIFKRGP</variation>
    <location>
        <begin position="87"/>
        <end position="132"/>
    </location>
</feature>
<feature type="splice variant" id="VSP_036599" description="In isoform 2 and isoform 3." evidence="8">
    <location>
        <begin position="227"/>
        <end position="260"/>
    </location>
</feature>
<feature type="sequence conflict" description="In Ref. 1; ABM68043." evidence="9" ref="1">
    <original>S</original>
    <variation>T</variation>
    <location>
        <position position="51"/>
    </location>
</feature>
<feature type="sequence conflict" description="In Ref. 1; ABM68043." evidence="9" ref="1">
    <original>M</original>
    <variation>I</variation>
    <location>
        <position position="62"/>
    </location>
</feature>
<feature type="sequence conflict" description="In Ref. 1; ABQ53160." evidence="9" ref="1">
    <original>G</original>
    <variation>R</variation>
    <location>
        <position position="79"/>
    </location>
</feature>
<feature type="sequence conflict" description="In Ref. 1; ABQ53159." evidence="9" ref="1">
    <original>M</original>
    <variation>T</variation>
    <location>
        <position position="179"/>
    </location>
</feature>
<reference key="1">
    <citation type="submission" date="2007-04" db="EMBL/GenBank/DDBJ databases">
        <title>Cloning and expression roles of the MEF2A gene in pig.</title>
        <authorList>
            <person name="Yang L."/>
            <person name="Gao Z."/>
            <person name="Liu D."/>
        </authorList>
    </citation>
    <scope>NUCLEOTIDE SEQUENCE [MRNA] (ISOFORMS 1; 2 AND 3)</scope>
</reference>
<keyword id="KW-0007">Acetylation</keyword>
<keyword id="KW-0010">Activator</keyword>
<keyword id="KW-0025">Alternative splicing</keyword>
<keyword id="KW-0053">Apoptosis</keyword>
<keyword id="KW-0217">Developmental protein</keyword>
<keyword id="KW-0221">Differentiation</keyword>
<keyword id="KW-0238">DNA-binding</keyword>
<keyword id="KW-1017">Isopeptide bond</keyword>
<keyword id="KW-0524">Neurogenesis</keyword>
<keyword id="KW-0539">Nucleus</keyword>
<keyword id="KW-0597">Phosphoprotein</keyword>
<keyword id="KW-1185">Reference proteome</keyword>
<keyword id="KW-0804">Transcription</keyword>
<keyword id="KW-0805">Transcription regulation</keyword>
<keyword id="KW-0832">Ubl conjugation</keyword>
<organism>
    <name type="scientific">Sus scrofa</name>
    <name type="common">Pig</name>
    <dbReference type="NCBI Taxonomy" id="9823"/>
    <lineage>
        <taxon>Eukaryota</taxon>
        <taxon>Metazoa</taxon>
        <taxon>Chordata</taxon>
        <taxon>Craniata</taxon>
        <taxon>Vertebrata</taxon>
        <taxon>Euteleostomi</taxon>
        <taxon>Mammalia</taxon>
        <taxon>Eutheria</taxon>
        <taxon>Laurasiatheria</taxon>
        <taxon>Artiodactyla</taxon>
        <taxon>Suina</taxon>
        <taxon>Suidae</taxon>
        <taxon>Sus</taxon>
    </lineage>
</organism>
<sequence>MGRKKIQITRIMDERNRQVTFTKRKFGLMKKAYELSVLCDCEIALIIFNSSNKLFQYASTDMDKVLLKYTEYNEPHESGTNSDIVEALNKKEHRGCDSPDPDTSYVLTPHTEEKYKKINEEFDNMMRNHKIAPGLPPQNFSMSVTVPVTSPNALSYTNPGSSLVSPSLAASSTLADSSMLSPPQATLHRNVSPGAPQRPPSTGSAGGMLSTSDLTVPNGAGSSPVGNGFVNSRASPNLVGTTGANSLGKVMPTESPPPPGGGNLGMNSRKPDLRVVIPPSSKGMMPPLSEEEELELNTQRISSSQAPQPLATPVVSVTTPSLPQQGLVYSAMPTAYNTDYSLTSADLSALQGFNSPGMLSLGQVSAWQQHHLGQAALSSLVAGGQLSQGSNLSINTNQNINIKSEPISPPRDRMTPSGFQQQQPPPPSQAPQPQPPQPQPQPQPQARQEMGRSPVDSLSSSSSSYDGSDREDPRGDFHSPVVLGRPPNTEDRESPSVKRMRMDAWVT</sequence>
<proteinExistence type="evidence at transcript level"/>
<name>MEF2A_PIG</name>
<dbReference type="EMBL" id="EF194143">
    <property type="protein sequence ID" value="ABM68043.1"/>
    <property type="molecule type" value="mRNA"/>
</dbReference>
<dbReference type="EMBL" id="EF576922">
    <property type="protein sequence ID" value="ABQ53159.1"/>
    <property type="molecule type" value="mRNA"/>
</dbReference>
<dbReference type="EMBL" id="EF576923">
    <property type="protein sequence ID" value="ABQ53160.1"/>
    <property type="molecule type" value="mRNA"/>
</dbReference>
<dbReference type="RefSeq" id="NP_001090890.1">
    <property type="nucleotide sequence ID" value="NM_001097421.1"/>
</dbReference>
<dbReference type="RefSeq" id="NP_001093168.1">
    <molecule id="A2ICN5-1"/>
    <property type="nucleotide sequence ID" value="NM_001099698.1"/>
</dbReference>
<dbReference type="SMR" id="A2ICN5"/>
<dbReference type="FunCoup" id="A2ICN5">
    <property type="interactions" value="492"/>
</dbReference>
<dbReference type="STRING" id="9823.ENSSSCP00000026217"/>
<dbReference type="PaxDb" id="9823-ENSSSCP00000026217"/>
<dbReference type="GeneID" id="100037273"/>
<dbReference type="KEGG" id="ssc:100037273"/>
<dbReference type="CTD" id="4205"/>
<dbReference type="eggNOG" id="KOG0014">
    <property type="taxonomic scope" value="Eukaryota"/>
</dbReference>
<dbReference type="InParanoid" id="A2ICN5"/>
<dbReference type="OrthoDB" id="1898716at2759"/>
<dbReference type="ChiTaRS" id="MEF2A">
    <property type="organism name" value="pig"/>
</dbReference>
<dbReference type="Proteomes" id="UP000008227">
    <property type="component" value="Unplaced"/>
</dbReference>
<dbReference type="Proteomes" id="UP000314985">
    <property type="component" value="Unplaced"/>
</dbReference>
<dbReference type="Proteomes" id="UP000694570">
    <property type="component" value="Unplaced"/>
</dbReference>
<dbReference type="Proteomes" id="UP000694571">
    <property type="component" value="Unplaced"/>
</dbReference>
<dbReference type="Proteomes" id="UP000694720">
    <property type="component" value="Unplaced"/>
</dbReference>
<dbReference type="Proteomes" id="UP000694722">
    <property type="component" value="Unplaced"/>
</dbReference>
<dbReference type="Proteomes" id="UP000694723">
    <property type="component" value="Unplaced"/>
</dbReference>
<dbReference type="Proteomes" id="UP000694724">
    <property type="component" value="Unplaced"/>
</dbReference>
<dbReference type="Proteomes" id="UP000694725">
    <property type="component" value="Unplaced"/>
</dbReference>
<dbReference type="Proteomes" id="UP000694726">
    <property type="component" value="Unplaced"/>
</dbReference>
<dbReference type="Proteomes" id="UP000694727">
    <property type="component" value="Unplaced"/>
</dbReference>
<dbReference type="Proteomes" id="UP000694728">
    <property type="component" value="Unplaced"/>
</dbReference>
<dbReference type="GO" id="GO:0005634">
    <property type="term" value="C:nucleus"/>
    <property type="evidence" value="ECO:0000250"/>
    <property type="project" value="UniProtKB"/>
</dbReference>
<dbReference type="GO" id="GO:0003682">
    <property type="term" value="F:chromatin binding"/>
    <property type="evidence" value="ECO:0000250"/>
    <property type="project" value="UniProtKB"/>
</dbReference>
<dbReference type="GO" id="GO:0000981">
    <property type="term" value="F:DNA-binding transcription factor activity, RNA polymerase II-specific"/>
    <property type="evidence" value="ECO:0000250"/>
    <property type="project" value="UniProtKB"/>
</dbReference>
<dbReference type="GO" id="GO:0140297">
    <property type="term" value="F:DNA-binding transcription factor binding"/>
    <property type="evidence" value="ECO:0000250"/>
    <property type="project" value="UniProtKB"/>
</dbReference>
<dbReference type="GO" id="GO:0035035">
    <property type="term" value="F:histone acetyltransferase binding"/>
    <property type="evidence" value="ECO:0000250"/>
    <property type="project" value="UniProtKB"/>
</dbReference>
<dbReference type="GO" id="GO:0042826">
    <property type="term" value="F:histone deacetylase binding"/>
    <property type="evidence" value="ECO:0000250"/>
    <property type="project" value="UniProtKB"/>
</dbReference>
<dbReference type="GO" id="GO:0046983">
    <property type="term" value="F:protein dimerization activity"/>
    <property type="evidence" value="ECO:0007669"/>
    <property type="project" value="InterPro"/>
</dbReference>
<dbReference type="GO" id="GO:0000978">
    <property type="term" value="F:RNA polymerase II cis-regulatory region sequence-specific DNA binding"/>
    <property type="evidence" value="ECO:0000318"/>
    <property type="project" value="GO_Central"/>
</dbReference>
<dbReference type="GO" id="GO:0000977">
    <property type="term" value="F:RNA polymerase II transcription regulatory region sequence-specific DNA binding"/>
    <property type="evidence" value="ECO:0000250"/>
    <property type="project" value="UniProtKB"/>
</dbReference>
<dbReference type="GO" id="GO:0046332">
    <property type="term" value="F:SMAD binding"/>
    <property type="evidence" value="ECO:0000250"/>
    <property type="project" value="UniProtKB"/>
</dbReference>
<dbReference type="GO" id="GO:0006915">
    <property type="term" value="P:apoptotic process"/>
    <property type="evidence" value="ECO:0007669"/>
    <property type="project" value="UniProtKB-KW"/>
</dbReference>
<dbReference type="GO" id="GO:0061337">
    <property type="term" value="P:cardiac conduction"/>
    <property type="evidence" value="ECO:0000250"/>
    <property type="project" value="UniProtKB"/>
</dbReference>
<dbReference type="GO" id="GO:0071277">
    <property type="term" value="P:cellular response to calcium ion"/>
    <property type="evidence" value="ECO:0000250"/>
    <property type="project" value="UniProtKB"/>
</dbReference>
<dbReference type="GO" id="GO:0048813">
    <property type="term" value="P:dendrite morphogenesis"/>
    <property type="evidence" value="ECO:0000250"/>
    <property type="project" value="UniProtKB"/>
</dbReference>
<dbReference type="GO" id="GO:0070375">
    <property type="term" value="P:ERK5 cascade"/>
    <property type="evidence" value="ECO:0000250"/>
    <property type="project" value="UniProtKB"/>
</dbReference>
<dbReference type="GO" id="GO:0000165">
    <property type="term" value="P:MAPK cascade"/>
    <property type="evidence" value="ECO:0000250"/>
    <property type="project" value="UniProtKB"/>
</dbReference>
<dbReference type="GO" id="GO:0000002">
    <property type="term" value="P:mitochondrial genome maintenance"/>
    <property type="evidence" value="ECO:0000250"/>
    <property type="project" value="UniProtKB"/>
</dbReference>
<dbReference type="GO" id="GO:0048311">
    <property type="term" value="P:mitochondrion distribution"/>
    <property type="evidence" value="ECO:0000250"/>
    <property type="project" value="UniProtKB"/>
</dbReference>
<dbReference type="GO" id="GO:0000122">
    <property type="term" value="P:negative regulation of transcription by RNA polymerase II"/>
    <property type="evidence" value="ECO:0000250"/>
    <property type="project" value="UniProtKB"/>
</dbReference>
<dbReference type="GO" id="GO:0045944">
    <property type="term" value="P:positive regulation of transcription by RNA polymerase II"/>
    <property type="evidence" value="ECO:0000250"/>
    <property type="project" value="UniProtKB"/>
</dbReference>
<dbReference type="GO" id="GO:0055005">
    <property type="term" value="P:ventricular cardiac myofibril assembly"/>
    <property type="evidence" value="ECO:0000250"/>
    <property type="project" value="UniProtKB"/>
</dbReference>
<dbReference type="CDD" id="cd00265">
    <property type="entry name" value="MADS_MEF2_like"/>
    <property type="match status" value="1"/>
</dbReference>
<dbReference type="FunFam" id="3.40.1810.10:FF:000001">
    <property type="entry name" value="Myocyte-specific enhancer factor 2A homolog"/>
    <property type="match status" value="1"/>
</dbReference>
<dbReference type="Gene3D" id="3.40.1810.10">
    <property type="entry name" value="Transcription factor, MADS-box"/>
    <property type="match status" value="1"/>
</dbReference>
<dbReference type="InterPro" id="IPR022102">
    <property type="entry name" value="HJURP_C"/>
</dbReference>
<dbReference type="InterPro" id="IPR033896">
    <property type="entry name" value="MEF2-like_N"/>
</dbReference>
<dbReference type="InterPro" id="IPR002100">
    <property type="entry name" value="TF_MADSbox"/>
</dbReference>
<dbReference type="InterPro" id="IPR036879">
    <property type="entry name" value="TF_MADSbox_sf"/>
</dbReference>
<dbReference type="PANTHER" id="PTHR11945">
    <property type="entry name" value="MADS BOX PROTEIN"/>
    <property type="match status" value="1"/>
</dbReference>
<dbReference type="PANTHER" id="PTHR11945:SF637">
    <property type="entry name" value="MYOCYTE-SPECIFIC ENHANCER FACTOR 2A"/>
    <property type="match status" value="1"/>
</dbReference>
<dbReference type="Pfam" id="PF12347">
    <property type="entry name" value="HJURP_C"/>
    <property type="match status" value="1"/>
</dbReference>
<dbReference type="Pfam" id="PF00319">
    <property type="entry name" value="SRF-TF"/>
    <property type="match status" value="1"/>
</dbReference>
<dbReference type="PRINTS" id="PR00404">
    <property type="entry name" value="MADSDOMAIN"/>
</dbReference>
<dbReference type="SMART" id="SM00432">
    <property type="entry name" value="MADS"/>
    <property type="match status" value="1"/>
</dbReference>
<dbReference type="SUPFAM" id="SSF55455">
    <property type="entry name" value="SRF-like"/>
    <property type="match status" value="1"/>
</dbReference>
<dbReference type="PROSITE" id="PS00350">
    <property type="entry name" value="MADS_BOX_1"/>
    <property type="match status" value="1"/>
</dbReference>
<dbReference type="PROSITE" id="PS50066">
    <property type="entry name" value="MADS_BOX_2"/>
    <property type="match status" value="1"/>
</dbReference>
<protein>
    <recommendedName>
        <fullName>Myocyte-specific enhancer factor 2A</fullName>
    </recommendedName>
</protein>
<gene>
    <name type="primary">MEF2A</name>
</gene>
<accession>A2ICN5</accession>
<accession>A5JUQ6</accession>
<accession>A5JUQ7</accession>
<evidence type="ECO:0000250" key="1"/>
<evidence type="ECO:0000250" key="2">
    <source>
        <dbReference type="UniProtKB" id="Q02078"/>
    </source>
</evidence>
<evidence type="ECO:0000250" key="3">
    <source>
        <dbReference type="UniProtKB" id="Q2MJT0"/>
    </source>
</evidence>
<evidence type="ECO:0000250" key="4">
    <source>
        <dbReference type="UniProtKB" id="Q60929"/>
    </source>
</evidence>
<evidence type="ECO:0000255" key="5"/>
<evidence type="ECO:0000255" key="6">
    <source>
        <dbReference type="PROSITE-ProRule" id="PRU00251"/>
    </source>
</evidence>
<evidence type="ECO:0000256" key="7">
    <source>
        <dbReference type="SAM" id="MobiDB-lite"/>
    </source>
</evidence>
<evidence type="ECO:0000303" key="8">
    <source ref="1"/>
</evidence>
<evidence type="ECO:0000305" key="9"/>